<gene>
    <name type="primary">mtnD</name>
    <name type="synonym">masB</name>
</gene>
<accession>Q9ZFE7</accession>
<accession>Q48390</accession>
<proteinExistence type="evidence at protein level"/>
<sequence>MSALTIFSVKDPQNSLWHSTNAEEIQQQLNAKGVRFERWQADRDLGAAPTAETVIAAYQHAIDKLVAEKGYQSWDVISLRADNPQKEALREKFLNEHTHGEDEVRFFVEGAGLFCLHIGDEVFQVLCEKNDLISVPAHTPHWFDMGSEPNFTAIRIFDNPEGWIAQFTGDDIASAYPRLA</sequence>
<dbReference type="EC" id="1.13.11.54"/>
<dbReference type="EC" id="1.13.11.53"/>
<dbReference type="EMBL" id="U00148">
    <property type="protein sequence ID" value="AAC43184.1"/>
    <property type="molecule type" value="Genomic_DNA"/>
</dbReference>
<dbReference type="EMBL" id="AF102514">
    <property type="protein sequence ID" value="AAD11793.1"/>
    <property type="molecule type" value="Genomic_DNA"/>
</dbReference>
<dbReference type="PIR" id="A59159">
    <property type="entry name" value="A59159"/>
</dbReference>
<dbReference type="PDB" id="1ZRR">
    <property type="method" value="NMR"/>
    <property type="chains" value="A=2-180"/>
</dbReference>
<dbReference type="PDB" id="2HJI">
    <property type="method" value="NMR"/>
    <property type="chains" value="A=2-180"/>
</dbReference>
<dbReference type="PDBsum" id="1ZRR"/>
<dbReference type="PDBsum" id="2HJI"/>
<dbReference type="BMRB" id="Q9ZFE7"/>
<dbReference type="SMR" id="Q9ZFE7"/>
<dbReference type="STRING" id="571.AB185_28070"/>
<dbReference type="KEGG" id="ag:AAD11793"/>
<dbReference type="eggNOG" id="COG1791">
    <property type="taxonomic scope" value="Bacteria"/>
</dbReference>
<dbReference type="BioCyc" id="MetaCyc:MONOMER-1323"/>
<dbReference type="BRENDA" id="1.13.11.53">
    <property type="organism ID" value="2811"/>
</dbReference>
<dbReference type="BRENDA" id="1.13.11.54">
    <property type="organism ID" value="2811"/>
</dbReference>
<dbReference type="SABIO-RK" id="Q9ZFE7"/>
<dbReference type="UniPathway" id="UPA00904">
    <property type="reaction ID" value="UER00878"/>
</dbReference>
<dbReference type="EvolutionaryTrace" id="Q9ZFE7"/>
<dbReference type="GO" id="GO:0010308">
    <property type="term" value="F:acireductone dioxygenase (Ni2+-requiring) activity"/>
    <property type="evidence" value="ECO:0007669"/>
    <property type="project" value="UniProtKB-UniRule"/>
</dbReference>
<dbReference type="GO" id="GO:0010309">
    <property type="term" value="F:acireductone dioxygenase [iron(II)-requiring] activity"/>
    <property type="evidence" value="ECO:0007669"/>
    <property type="project" value="UniProtKB-UniRule"/>
</dbReference>
<dbReference type="GO" id="GO:0005506">
    <property type="term" value="F:iron ion binding"/>
    <property type="evidence" value="ECO:0007669"/>
    <property type="project" value="UniProtKB-UniRule"/>
</dbReference>
<dbReference type="GO" id="GO:0016151">
    <property type="term" value="F:nickel cation binding"/>
    <property type="evidence" value="ECO:0007669"/>
    <property type="project" value="UniProtKB-UniRule"/>
</dbReference>
<dbReference type="GO" id="GO:0019509">
    <property type="term" value="P:L-methionine salvage from methylthioadenosine"/>
    <property type="evidence" value="ECO:0007669"/>
    <property type="project" value="UniProtKB-UniRule"/>
</dbReference>
<dbReference type="GO" id="GO:0019284">
    <property type="term" value="P:L-methionine salvage from S-adenosylmethionine"/>
    <property type="evidence" value="ECO:0007669"/>
    <property type="project" value="InterPro"/>
</dbReference>
<dbReference type="CDD" id="cd02232">
    <property type="entry name" value="cupin_ARD"/>
    <property type="match status" value="1"/>
</dbReference>
<dbReference type="Gene3D" id="2.60.120.10">
    <property type="entry name" value="Jelly Rolls"/>
    <property type="match status" value="1"/>
</dbReference>
<dbReference type="HAMAP" id="MF_01682">
    <property type="entry name" value="Salvage_MtnD"/>
    <property type="match status" value="1"/>
</dbReference>
<dbReference type="InterPro" id="IPR004313">
    <property type="entry name" value="ARD"/>
</dbReference>
<dbReference type="InterPro" id="IPR023956">
    <property type="entry name" value="ARD_bac"/>
</dbReference>
<dbReference type="InterPro" id="IPR014710">
    <property type="entry name" value="RmlC-like_jellyroll"/>
</dbReference>
<dbReference type="InterPro" id="IPR011051">
    <property type="entry name" value="RmlC_Cupin_sf"/>
</dbReference>
<dbReference type="PANTHER" id="PTHR23418">
    <property type="entry name" value="ACIREDUCTONE DIOXYGENASE"/>
    <property type="match status" value="1"/>
</dbReference>
<dbReference type="PANTHER" id="PTHR23418:SF0">
    <property type="entry name" value="ACIREDUCTONE DIOXYGENASE"/>
    <property type="match status" value="1"/>
</dbReference>
<dbReference type="Pfam" id="PF03079">
    <property type="entry name" value="ARD"/>
    <property type="match status" value="1"/>
</dbReference>
<dbReference type="SUPFAM" id="SSF51182">
    <property type="entry name" value="RmlC-like cupins"/>
    <property type="match status" value="1"/>
</dbReference>
<protein>
    <recommendedName>
        <fullName>Acireductone dioxygenase</fullName>
    </recommendedName>
    <alternativeName>
        <fullName>1,2-dihydroxy-3-keto-5-methylthiopentene dioxygenase</fullName>
        <shortName>DHK-MTPene dioxygenase</shortName>
    </alternativeName>
    <alternativeName>
        <fullName>Acireductone dioxygenase (Fe(2+)-requiring)</fullName>
        <shortName>ARD'</shortName>
        <shortName>Fe-ARD</shortName>
        <ecNumber>1.13.11.54</ecNumber>
    </alternativeName>
    <alternativeName>
        <fullName>Acireductone dioxygenase (Ni(2+)-requiring)</fullName>
        <shortName>ARD</shortName>
        <shortName>Ni-ARD</shortName>
        <ecNumber>1.13.11.53</ecNumber>
    </alternativeName>
</protein>
<reference key="1">
    <citation type="journal article" date="1993" name="J. Biol. Chem.">
        <title>Appendix. Cloning and sequence of the gene encoding enzyme E-1 from the methionine salvage pathway of Klebsiella oxytoca.</title>
        <authorList>
            <person name="Balakrishnan R."/>
            <person name="Frohlich M."/>
            <person name="Rahaim P.T."/>
            <person name="Backman K."/>
            <person name="Yocum R.R."/>
        </authorList>
    </citation>
    <scope>NUCLEOTIDE SEQUENCE [GENOMIC DNA] OF 1-82</scope>
    <source>
        <strain>M5a1</strain>
    </source>
</reference>
<reference key="2">
    <citation type="journal article" date="1999" name="J. Biol. Chem.">
        <title>One protein, two enzymes.</title>
        <authorList>
            <person name="Dai Y."/>
            <person name="Wensink P.C."/>
            <person name="Abeles R.H."/>
        </authorList>
    </citation>
    <scope>NUCLEOTIDE SEQUENCE [GENOMIC DNA] OF 2-180</scope>
    <scope>PROTEIN SEQUENCE OF N-TERMINUS</scope>
    <scope>MASS SPECTROMETRY</scope>
    <scope>COFACTOR</scope>
    <source>
        <strain>UNF932</strain>
    </source>
</reference>
<reference key="3">
    <citation type="journal article" date="1993" name="J. Biol. Chem.">
        <title>A bacterial enzyme that catalyzes formation of carbon monoxide.</title>
        <authorList>
            <person name="Wray J.W."/>
            <person name="Abeles R.H."/>
        </authorList>
    </citation>
    <scope>FUNCTION</scope>
    <scope>CATALYTIC ACTIVITY</scope>
</reference>
<reference key="4">
    <citation type="journal article" date="2001" name="Biochemistry">
        <title>Mechanistic studies of two dioxygenases in the methionine salvage pathway of Klebsiella pneumoniae.</title>
        <authorList>
            <person name="Dai Y."/>
            <person name="Pochapsky T.C."/>
            <person name="Abeles R.H."/>
        </authorList>
    </citation>
    <scope>MASS SPECTROMETRY</scope>
    <scope>SUBUNIT</scope>
    <scope>COFACTOR</scope>
    <scope>BIOPHYSICOCHEMICAL PROPERTIES</scope>
</reference>
<reference key="5">
    <citation type="journal article" date="2008" name="Biochemistry">
        <title>Characterization of metal binding in the active sites of acireductone dioxygenase isoforms from Klebsiella ATCC 8724.</title>
        <authorList>
            <person name="Chai S.C."/>
            <person name="Ju T."/>
            <person name="Dang M."/>
            <person name="Goldsmith R.B."/>
            <person name="Maroney M.J."/>
            <person name="Pochapsky T.C."/>
        </authorList>
    </citation>
    <scope>MUTAGENESIS OF GLU-96; HIS-97; HIS-99; GLU-101; ASP-102; GLU-103 AND HIS-141</scope>
    <scope>COFACTOR</scope>
</reference>
<reference key="6">
    <citation type="journal article" date="2002" name="Nat. Struct. Biol.">
        <title>Modeling and experiment yields the structure of acireductone dioxygenase from Klebsiella pneumoniae.</title>
        <authorList>
            <person name="Pochapsky T.C."/>
            <person name="Pochapsky S.S."/>
            <person name="Ju T."/>
            <person name="Mo H."/>
            <person name="Al-Mjeni F."/>
            <person name="Maroney M.J."/>
        </authorList>
    </citation>
    <scope>STRUCTURE BY NMR</scope>
    <scope>SUBUNIT</scope>
    <scope>COFACTOR</scope>
</reference>
<reference evidence="9" key="7">
    <citation type="journal article" date="2006" name="J. Biomol. NMR">
        <title>A refined model for the structure of acireductone dioxygenase from Klebsiella ATCC 8724 incorporating residual dipolar couplings.</title>
        <authorList>
            <person name="Pochapsky T.C."/>
            <person name="Pochapsky S.S."/>
            <person name="Ju T."/>
            <person name="Hoefler C."/>
            <person name="Liang J."/>
        </authorList>
    </citation>
    <scope>STRUCTURE BY NMR IN COMPLEX WITH NI(2+)</scope>
</reference>
<reference evidence="10" key="8">
    <citation type="journal article" date="2006" name="J. Mol. Biol.">
        <title>One protein, two enzymes revisited: a structural entropy switch interconverts the two isoforms of acireductone dioxygenase.</title>
        <authorList>
            <person name="Ju T."/>
            <person name="Goldsmith R.B."/>
            <person name="Chai S.C."/>
            <person name="Maroney M.J."/>
            <person name="Pochapsky S.S."/>
            <person name="Pochapsky T.C."/>
        </authorList>
    </citation>
    <scope>STRUCTURE BY NMR IN COMPLEX WITH FE(2+)</scope>
    <scope>SUBUNIT</scope>
</reference>
<feature type="chain" id="PRO_0000359200" description="Acireductone dioxygenase">
    <location>
        <begin position="1"/>
        <end position="180"/>
    </location>
</feature>
<feature type="binding site" evidence="4 10">
    <location>
        <position position="97"/>
    </location>
    <ligand>
        <name>Fe(2+)</name>
        <dbReference type="ChEBI" id="CHEBI:29033"/>
    </ligand>
</feature>
<feature type="binding site" evidence="3 9">
    <location>
        <position position="97"/>
    </location>
    <ligand>
        <name>Ni(2+)</name>
        <dbReference type="ChEBI" id="CHEBI:49786"/>
    </ligand>
</feature>
<feature type="binding site" evidence="4 10">
    <location>
        <position position="99"/>
    </location>
    <ligand>
        <name>Fe(2+)</name>
        <dbReference type="ChEBI" id="CHEBI:29033"/>
    </ligand>
</feature>
<feature type="binding site" evidence="3 9">
    <location>
        <position position="99"/>
    </location>
    <ligand>
        <name>Ni(2+)</name>
        <dbReference type="ChEBI" id="CHEBI:49786"/>
    </ligand>
</feature>
<feature type="binding site" evidence="4 10">
    <location>
        <position position="103"/>
    </location>
    <ligand>
        <name>Fe(2+)</name>
        <dbReference type="ChEBI" id="CHEBI:29033"/>
    </ligand>
</feature>
<feature type="binding site" evidence="3 9">
    <location>
        <position position="103"/>
    </location>
    <ligand>
        <name>Ni(2+)</name>
        <dbReference type="ChEBI" id="CHEBI:49786"/>
    </ligand>
</feature>
<feature type="binding site" evidence="4 10">
    <location>
        <position position="141"/>
    </location>
    <ligand>
        <name>Fe(2+)</name>
        <dbReference type="ChEBI" id="CHEBI:29033"/>
    </ligand>
</feature>
<feature type="binding site" evidence="3 9">
    <location>
        <position position="141"/>
    </location>
    <ligand>
        <name>Ni(2+)</name>
        <dbReference type="ChEBI" id="CHEBI:49786"/>
    </ligand>
</feature>
<feature type="site" description="May play a role in metal incorporation in vivo">
    <location>
        <position position="96"/>
    </location>
</feature>
<feature type="site" description="May play a role in transmitting local conformational changes">
    <location>
        <position position="102"/>
    </location>
</feature>
<feature type="site" description="Important to generate the dianion">
    <location>
        <position position="105"/>
    </location>
</feature>
<feature type="mutagenesis site" description="Loss of dioxygenase activity and decrease in expression of soluble protein." evidence="5">
    <original>E</original>
    <variation>A</variation>
    <location>
        <position position="96"/>
    </location>
</feature>
<feature type="mutagenesis site" description="Loss of dioxygenase activity and strong decrease in expression of soluble protein." evidence="5">
    <original>H</original>
    <variation>A</variation>
    <location>
        <position position="97"/>
    </location>
</feature>
<feature type="mutagenesis site" description="Loss of dioxygenase activity and decrease in expression of soluble protein." evidence="5">
    <original>H</original>
    <variation>A</variation>
    <location>
        <position position="99"/>
    </location>
</feature>
<feature type="mutagenesis site" description="Loss of dioxygenase activity, and little affinity for either Ni(2+) or Fe(2+) ions." evidence="5">
    <original>H</original>
    <variation>S</variation>
    <location>
        <position position="99"/>
    </location>
</feature>
<feature type="mutagenesis site" description="Strong decrease in dioxygenase activity. Exhibits high affinity for both Ni(2+) and Fe(2+) ions, but the activities of both Ni(2+)- and Fe(2+)-reconstituted mutant are considerably lower than wild-type enzymes." evidence="5">
    <original>E</original>
    <variation>A</variation>
    <location>
        <position position="101"/>
    </location>
</feature>
<feature type="mutagenesis site" description="Shows a slight decrease in dioxygenase activity and high affinity for both Ni(2+) and Fe(2+) ions." evidence="5">
    <original>D</original>
    <variation>A</variation>
    <location>
        <position position="102"/>
    </location>
</feature>
<feature type="mutagenesis site" description="Loss of dioxygenase activity and strong decrease in expression of soluble protein." evidence="5">
    <original>E</original>
    <variation>A</variation>
    <location>
        <position position="103"/>
    </location>
</feature>
<feature type="mutagenesis site" description="No expression of soluble protein." evidence="5">
    <original>H</original>
    <variation>A</variation>
    <location>
        <position position="141"/>
    </location>
</feature>
<feature type="mutagenesis site" description="Strong decrease in expression of soluble protein." evidence="5">
    <original>H</original>
    <variation>F</variation>
    <location>
        <position position="141"/>
    </location>
</feature>
<feature type="strand" evidence="11">
    <location>
        <begin position="3"/>
        <end position="7"/>
    </location>
</feature>
<feature type="strand" evidence="12">
    <location>
        <begin position="12"/>
        <end position="14"/>
    </location>
</feature>
<feature type="strand" evidence="11">
    <location>
        <begin position="15"/>
        <end position="19"/>
    </location>
</feature>
<feature type="helix" evidence="11">
    <location>
        <begin position="23"/>
        <end position="31"/>
    </location>
</feature>
<feature type="strand" evidence="12">
    <location>
        <begin position="35"/>
        <end position="37"/>
    </location>
</feature>
<feature type="helix" evidence="11">
    <location>
        <begin position="51"/>
        <end position="69"/>
    </location>
</feature>
<feature type="strand" evidence="11">
    <location>
        <begin position="72"/>
        <end position="77"/>
    </location>
</feature>
<feature type="helix" evidence="11">
    <location>
        <begin position="85"/>
        <end position="94"/>
    </location>
</feature>
<feature type="strand" evidence="11">
    <location>
        <begin position="97"/>
        <end position="101"/>
    </location>
</feature>
<feature type="strand" evidence="11">
    <location>
        <begin position="103"/>
        <end position="110"/>
    </location>
</feature>
<feature type="strand" evidence="11">
    <location>
        <begin position="122"/>
        <end position="126"/>
    </location>
</feature>
<feature type="strand" evidence="11">
    <location>
        <begin position="132"/>
        <end position="135"/>
    </location>
</feature>
<feature type="strand" evidence="12">
    <location>
        <begin position="141"/>
        <end position="144"/>
    </location>
</feature>
<feature type="strand" evidence="11">
    <location>
        <begin position="152"/>
        <end position="157"/>
    </location>
</feature>
<feature type="helix" evidence="11">
    <location>
        <begin position="160"/>
        <end position="162"/>
    </location>
</feature>
<feature type="strand" evidence="11">
    <location>
        <begin position="163"/>
        <end position="165"/>
    </location>
</feature>
<feature type="helix" evidence="11">
    <location>
        <begin position="173"/>
        <end position="175"/>
    </location>
</feature>
<name>MTND_KLEOX</name>
<evidence type="ECO:0000269" key="1">
    <source>
    </source>
</evidence>
<evidence type="ECO:0000269" key="2">
    <source>
    </source>
</evidence>
<evidence type="ECO:0000269" key="3">
    <source>
    </source>
</evidence>
<evidence type="ECO:0000269" key="4">
    <source>
    </source>
</evidence>
<evidence type="ECO:0000269" key="5">
    <source>
    </source>
</evidence>
<evidence type="ECO:0000269" key="6">
    <source>
    </source>
</evidence>
<evidence type="ECO:0000269" key="7">
    <source>
    </source>
</evidence>
<evidence type="ECO:0000305" key="8"/>
<evidence type="ECO:0007744" key="9">
    <source>
        <dbReference type="PDB" id="1ZRR"/>
    </source>
</evidence>
<evidence type="ECO:0007744" key="10">
    <source>
        <dbReference type="PDB" id="2HJI"/>
    </source>
</evidence>
<evidence type="ECO:0007829" key="11">
    <source>
        <dbReference type="PDB" id="1ZRR"/>
    </source>
</evidence>
<evidence type="ECO:0007829" key="12">
    <source>
        <dbReference type="PDB" id="2HJI"/>
    </source>
</evidence>
<comment type="function">
    <text evidence="6">Catalyzes 2 different reactions between oxygen and the acireductone 1,2-dihydroxy-3-keto-5-methylthiopentene (DHK-MTPene) depending upon the metal bound in the active site. Fe-containing acireductone dioxygenase (Fe-ARD) produces formate and 2-keto-4-methylthiobutyrate (KMTB), the alpha-ketoacid precursor of methionine in the methionine recycle pathway. Ni-containing acireductone dioxygenase (Ni-ARD) produces methylthiopropionate, carbon monoxide and formate, and does not lie on the methionine recycle pathway.</text>
</comment>
<comment type="catalytic activity">
    <reaction evidence="6">
        <text>1,2-dihydroxy-5-(methylsulfanyl)pent-1-en-3-one + O2 = 3-(methylsulfanyl)propanoate + CO + formate + 2 H(+)</text>
        <dbReference type="Rhea" id="RHEA:14161"/>
        <dbReference type="ChEBI" id="CHEBI:15378"/>
        <dbReference type="ChEBI" id="CHEBI:15379"/>
        <dbReference type="ChEBI" id="CHEBI:15740"/>
        <dbReference type="ChEBI" id="CHEBI:17245"/>
        <dbReference type="ChEBI" id="CHEBI:49016"/>
        <dbReference type="ChEBI" id="CHEBI:49252"/>
        <dbReference type="EC" id="1.13.11.53"/>
    </reaction>
</comment>
<comment type="catalytic activity">
    <reaction evidence="6">
        <text>1,2-dihydroxy-5-(methylsulfanyl)pent-1-en-3-one + O2 = 4-methylsulfanyl-2-oxobutanoate + formate + 2 H(+)</text>
        <dbReference type="Rhea" id="RHEA:24504"/>
        <dbReference type="ChEBI" id="CHEBI:15378"/>
        <dbReference type="ChEBI" id="CHEBI:15379"/>
        <dbReference type="ChEBI" id="CHEBI:15740"/>
        <dbReference type="ChEBI" id="CHEBI:16723"/>
        <dbReference type="ChEBI" id="CHEBI:49252"/>
        <dbReference type="EC" id="1.13.11.54"/>
    </reaction>
</comment>
<comment type="cofactor">
    <cofactor>
        <name>Fe(2+)</name>
        <dbReference type="ChEBI" id="CHEBI:29033"/>
    </cofactor>
    <cofactor>
        <name>Mg(2+)</name>
        <dbReference type="ChEBI" id="CHEBI:18420"/>
    </cofactor>
    <text>Binds 1 Fe(2+) ion per monomer. Can be replaced by Mg(2+), but with lower activity.</text>
</comment>
<comment type="cofactor">
    <cofactor>
        <name>Ni(2+)</name>
        <dbReference type="ChEBI" id="CHEBI:49786"/>
    </cofactor>
    <cofactor>
        <name>Mn(2+)</name>
        <dbReference type="ChEBI" id="CHEBI:29035"/>
    </cofactor>
    <cofactor>
        <name>Co(2+)</name>
        <dbReference type="ChEBI" id="CHEBI:48828"/>
    </cofactor>
    <text>Binds 1 nickel ion per monomer. Can be replaced by manganese or cobalt ions.</text>
</comment>
<comment type="biophysicochemical properties">
    <kinetics>
        <KM evidence="1">50 uM for 1,2-dihydroxy-3-keto-1-hexene (with Ni-ARD)</KM>
        <KM evidence="1">52 uM for 1,2-dihydroxy-3-keto-1-hexene (with Fe-ARD)</KM>
        <KM evidence="1">47 uM for oxygen (with Fe-ARD)</KM>
        <KM evidence="1">110 uM for oxygen (with Ni-ARD)</KM>
    </kinetics>
</comment>
<comment type="pathway">
    <text>Amino-acid biosynthesis; L-methionine biosynthesis via salvage pathway; L-methionine from S-methyl-5-thio-alpha-D-ribose 1-phosphate: step 5/6.</text>
</comment>
<comment type="subunit">
    <text evidence="1 2 4">Monomer.</text>
</comment>
<comment type="mass spectrometry">
    <text>Ni-ARD.</text>
</comment>
<comment type="mass spectrometry">
    <text>Fe-ARD.</text>
</comment>
<comment type="mass spectrometry">
    <text>Fe-ARD.</text>
</comment>
<comment type="similarity">
    <text evidence="8">Belongs to the acireductone dioxygenase (ARD) family.</text>
</comment>
<organism>
    <name type="scientific">Klebsiella oxytoca</name>
    <dbReference type="NCBI Taxonomy" id="571"/>
    <lineage>
        <taxon>Bacteria</taxon>
        <taxon>Pseudomonadati</taxon>
        <taxon>Pseudomonadota</taxon>
        <taxon>Gammaproteobacteria</taxon>
        <taxon>Enterobacterales</taxon>
        <taxon>Enterobacteriaceae</taxon>
        <taxon>Klebsiella/Raoultella group</taxon>
        <taxon>Klebsiella</taxon>
    </lineage>
</organism>
<keyword id="KW-0002">3D-structure</keyword>
<keyword id="KW-0028">Amino-acid biosynthesis</keyword>
<keyword id="KW-0223">Dioxygenase</keyword>
<keyword id="KW-0903">Direct protein sequencing</keyword>
<keyword id="KW-0408">Iron</keyword>
<keyword id="KW-0479">Metal-binding</keyword>
<keyword id="KW-0486">Methionine biosynthesis</keyword>
<keyword id="KW-0533">Nickel</keyword>
<keyword id="KW-0560">Oxidoreductase</keyword>